<gene>
    <name evidence="1" type="primary">rplW</name>
    <name type="ordered locus">AB57_3528</name>
</gene>
<organism>
    <name type="scientific">Acinetobacter baumannii (strain AB0057)</name>
    <dbReference type="NCBI Taxonomy" id="480119"/>
    <lineage>
        <taxon>Bacteria</taxon>
        <taxon>Pseudomonadati</taxon>
        <taxon>Pseudomonadota</taxon>
        <taxon>Gammaproteobacteria</taxon>
        <taxon>Moraxellales</taxon>
        <taxon>Moraxellaceae</taxon>
        <taxon>Acinetobacter</taxon>
        <taxon>Acinetobacter calcoaceticus/baumannii complex</taxon>
    </lineage>
</organism>
<protein>
    <recommendedName>
        <fullName evidence="1">Large ribosomal subunit protein uL23</fullName>
    </recommendedName>
    <alternativeName>
        <fullName evidence="2">50S ribosomal protein L23</fullName>
    </alternativeName>
</protein>
<dbReference type="EMBL" id="CP001182">
    <property type="protein sequence ID" value="ACJ42895.1"/>
    <property type="molecule type" value="Genomic_DNA"/>
</dbReference>
<dbReference type="RefSeq" id="WP_001058538.1">
    <property type="nucleotide sequence ID" value="NC_011586.2"/>
</dbReference>
<dbReference type="PDB" id="6V39">
    <property type="method" value="EM"/>
    <property type="resolution" value="3.04 A"/>
    <property type="chains" value="S=1-106"/>
</dbReference>
<dbReference type="PDB" id="6V3A">
    <property type="method" value="EM"/>
    <property type="resolution" value="2.82 A"/>
    <property type="chains" value="S=1-106"/>
</dbReference>
<dbReference type="PDB" id="6V3B">
    <property type="method" value="EM"/>
    <property type="resolution" value="2.91 A"/>
    <property type="chains" value="S=1-106"/>
</dbReference>
<dbReference type="PDB" id="6V3D">
    <property type="method" value="EM"/>
    <property type="resolution" value="2.95 A"/>
    <property type="chains" value="S=1-106"/>
</dbReference>
<dbReference type="PDB" id="7M4V">
    <property type="method" value="EM"/>
    <property type="resolution" value="2.54 A"/>
    <property type="chains" value="S=1-106"/>
</dbReference>
<dbReference type="PDB" id="7M4W">
    <property type="method" value="EM"/>
    <property type="resolution" value="2.55 A"/>
    <property type="chains" value="S=1-106"/>
</dbReference>
<dbReference type="PDB" id="7M4X">
    <property type="method" value="EM"/>
    <property type="resolution" value="2.66 A"/>
    <property type="chains" value="S=1-106"/>
</dbReference>
<dbReference type="PDB" id="7M4Y">
    <property type="method" value="EM"/>
    <property type="resolution" value="2.50 A"/>
    <property type="chains" value="S=1-106"/>
</dbReference>
<dbReference type="PDB" id="7M4Z">
    <property type="method" value="EM"/>
    <property type="resolution" value="2.92 A"/>
    <property type="chains" value="S=1-106"/>
</dbReference>
<dbReference type="PDB" id="7RYF">
    <property type="method" value="EM"/>
    <property type="resolution" value="2.65 A"/>
    <property type="chains" value="S=1-106"/>
</dbReference>
<dbReference type="PDB" id="7RYG">
    <property type="method" value="EM"/>
    <property type="resolution" value="2.38 A"/>
    <property type="chains" value="S=1-106"/>
</dbReference>
<dbReference type="PDB" id="7RYH">
    <property type="method" value="EM"/>
    <property type="resolution" value="2.43 A"/>
    <property type="chains" value="S=1-106"/>
</dbReference>
<dbReference type="PDB" id="7UVV">
    <property type="method" value="EM"/>
    <property type="resolution" value="2.50 A"/>
    <property type="chains" value="S=1-106"/>
</dbReference>
<dbReference type="PDB" id="7UVW">
    <property type="method" value="EM"/>
    <property type="resolution" value="2.37 A"/>
    <property type="chains" value="S=1-106"/>
</dbReference>
<dbReference type="PDB" id="7UVX">
    <property type="method" value="EM"/>
    <property type="resolution" value="2.35 A"/>
    <property type="chains" value="S=1-106"/>
</dbReference>
<dbReference type="PDB" id="7UVY">
    <property type="method" value="EM"/>
    <property type="resolution" value="2.39 A"/>
    <property type="chains" value="S=1-106"/>
</dbReference>
<dbReference type="PDB" id="7UVZ">
    <property type="method" value="EM"/>
    <property type="resolution" value="2.21 A"/>
    <property type="chains" value="S=1-106"/>
</dbReference>
<dbReference type="PDB" id="7UW1">
    <property type="method" value="EM"/>
    <property type="resolution" value="2.21 A"/>
    <property type="chains" value="S=1-106"/>
</dbReference>
<dbReference type="PDBsum" id="6V39"/>
<dbReference type="PDBsum" id="6V3A"/>
<dbReference type="PDBsum" id="6V3B"/>
<dbReference type="PDBsum" id="6V3D"/>
<dbReference type="PDBsum" id="7M4V"/>
<dbReference type="PDBsum" id="7M4W"/>
<dbReference type="PDBsum" id="7M4X"/>
<dbReference type="PDBsum" id="7M4Y"/>
<dbReference type="PDBsum" id="7M4Z"/>
<dbReference type="PDBsum" id="7RYF"/>
<dbReference type="PDBsum" id="7RYG"/>
<dbReference type="PDBsum" id="7RYH"/>
<dbReference type="PDBsum" id="7UVV"/>
<dbReference type="PDBsum" id="7UVW"/>
<dbReference type="PDBsum" id="7UVX"/>
<dbReference type="PDBsum" id="7UVY"/>
<dbReference type="PDBsum" id="7UVZ"/>
<dbReference type="PDBsum" id="7UW1"/>
<dbReference type="EMDB" id="EMD-21030"/>
<dbReference type="EMDB" id="EMD-21031"/>
<dbReference type="EMDB" id="EMD-21032"/>
<dbReference type="EMDB" id="EMD-21033"/>
<dbReference type="EMDB" id="EMD-23667"/>
<dbReference type="EMDB" id="EMD-23668"/>
<dbReference type="EMDB" id="EMD-23669"/>
<dbReference type="EMDB" id="EMD-23670"/>
<dbReference type="EMDB" id="EMD-23671"/>
<dbReference type="EMDB" id="EMD-24738"/>
<dbReference type="EMDB" id="EMD-24739"/>
<dbReference type="EMDB" id="EMD-24740"/>
<dbReference type="EMDB" id="EMD-26817"/>
<dbReference type="EMDB" id="EMD-26818"/>
<dbReference type="EMDB" id="EMD-26819"/>
<dbReference type="EMDB" id="EMD-26820"/>
<dbReference type="EMDB" id="EMD-26821"/>
<dbReference type="EMDB" id="EMD-26822"/>
<dbReference type="SMR" id="B7IA37"/>
<dbReference type="IntAct" id="B7IA37">
    <property type="interactions" value="2"/>
</dbReference>
<dbReference type="GeneID" id="92895315"/>
<dbReference type="KEGG" id="abn:AB57_3528"/>
<dbReference type="HOGENOM" id="CLU_037562_3_1_6"/>
<dbReference type="Proteomes" id="UP000007094">
    <property type="component" value="Chromosome"/>
</dbReference>
<dbReference type="GO" id="GO:1990904">
    <property type="term" value="C:ribonucleoprotein complex"/>
    <property type="evidence" value="ECO:0007669"/>
    <property type="project" value="UniProtKB-KW"/>
</dbReference>
<dbReference type="GO" id="GO:0005840">
    <property type="term" value="C:ribosome"/>
    <property type="evidence" value="ECO:0007669"/>
    <property type="project" value="UniProtKB-KW"/>
</dbReference>
<dbReference type="GO" id="GO:0019843">
    <property type="term" value="F:rRNA binding"/>
    <property type="evidence" value="ECO:0007669"/>
    <property type="project" value="UniProtKB-UniRule"/>
</dbReference>
<dbReference type="GO" id="GO:0003735">
    <property type="term" value="F:structural constituent of ribosome"/>
    <property type="evidence" value="ECO:0007669"/>
    <property type="project" value="InterPro"/>
</dbReference>
<dbReference type="GO" id="GO:0006412">
    <property type="term" value="P:translation"/>
    <property type="evidence" value="ECO:0007669"/>
    <property type="project" value="UniProtKB-UniRule"/>
</dbReference>
<dbReference type="FunFam" id="3.30.70.330:FF:000001">
    <property type="entry name" value="50S ribosomal protein L23"/>
    <property type="match status" value="1"/>
</dbReference>
<dbReference type="Gene3D" id="3.30.70.330">
    <property type="match status" value="1"/>
</dbReference>
<dbReference type="HAMAP" id="MF_01369_B">
    <property type="entry name" value="Ribosomal_uL23_B"/>
    <property type="match status" value="1"/>
</dbReference>
<dbReference type="InterPro" id="IPR012677">
    <property type="entry name" value="Nucleotide-bd_a/b_plait_sf"/>
</dbReference>
<dbReference type="InterPro" id="IPR013025">
    <property type="entry name" value="Ribosomal_uL23-like"/>
</dbReference>
<dbReference type="InterPro" id="IPR012678">
    <property type="entry name" value="Ribosomal_uL23/eL15/eS24_sf"/>
</dbReference>
<dbReference type="NCBIfam" id="NF004359">
    <property type="entry name" value="PRK05738.1-3"/>
    <property type="match status" value="1"/>
</dbReference>
<dbReference type="NCBIfam" id="NF004363">
    <property type="entry name" value="PRK05738.2-4"/>
    <property type="match status" value="1"/>
</dbReference>
<dbReference type="PANTHER" id="PTHR11620">
    <property type="entry name" value="60S RIBOSOMAL PROTEIN L23A"/>
    <property type="match status" value="1"/>
</dbReference>
<dbReference type="Pfam" id="PF00276">
    <property type="entry name" value="Ribosomal_L23"/>
    <property type="match status" value="1"/>
</dbReference>
<dbReference type="SUPFAM" id="SSF54189">
    <property type="entry name" value="Ribosomal proteins S24e, L23 and L15e"/>
    <property type="match status" value="1"/>
</dbReference>
<comment type="function">
    <text evidence="1">One of the early assembly proteins it binds 23S rRNA. One of the proteins that surrounds the polypeptide exit tunnel on the outside of the ribosome. Forms the main docking site for trigger factor binding to the ribosome.</text>
</comment>
<comment type="subunit">
    <text evidence="1">Part of the 50S ribosomal subunit. Contacts protein L29, and trigger factor when it is bound to the ribosome.</text>
</comment>
<comment type="similarity">
    <text evidence="1">Belongs to the universal ribosomal protein uL23 family.</text>
</comment>
<reference key="1">
    <citation type="journal article" date="2008" name="J. Bacteriol.">
        <title>Comparative genome sequence analysis of multidrug-resistant Acinetobacter baumannii.</title>
        <authorList>
            <person name="Adams M.D."/>
            <person name="Goglin K."/>
            <person name="Molyneaux N."/>
            <person name="Hujer K.M."/>
            <person name="Lavender H."/>
            <person name="Jamison J.J."/>
            <person name="MacDonald I.J."/>
            <person name="Martin K.M."/>
            <person name="Russo T."/>
            <person name="Campagnari A.A."/>
            <person name="Hujer A.M."/>
            <person name="Bonomo R.A."/>
            <person name="Gill S.R."/>
        </authorList>
    </citation>
    <scope>NUCLEOTIDE SEQUENCE [LARGE SCALE GENOMIC DNA]</scope>
    <source>
        <strain>AB0057</strain>
    </source>
</reference>
<sequence>MNNERIYQVLKGPVFSEKAQVLGDTAGVQVFKVDINATKLEIKKAVEKLFGVEVVKVNTTITKGKTKRFGRTLGRRSDVKKAYVTLKAGQDVEMADLGDTAESAAE</sequence>
<name>RL23_ACIB5</name>
<proteinExistence type="evidence at protein level"/>
<evidence type="ECO:0000255" key="1">
    <source>
        <dbReference type="HAMAP-Rule" id="MF_01369"/>
    </source>
</evidence>
<evidence type="ECO:0000305" key="2"/>
<evidence type="ECO:0007829" key="3">
    <source>
        <dbReference type="PDB" id="7M4V"/>
    </source>
</evidence>
<accession>B7IA37</accession>
<feature type="chain" id="PRO_1000144516" description="Large ribosomal subunit protein uL23">
    <location>
        <begin position="1"/>
        <end position="106"/>
    </location>
</feature>
<feature type="helix" evidence="3">
    <location>
        <begin position="3"/>
        <end position="9"/>
    </location>
</feature>
<feature type="strand" evidence="3">
    <location>
        <begin position="10"/>
        <end position="13"/>
    </location>
</feature>
<feature type="helix" evidence="3">
    <location>
        <begin position="17"/>
        <end position="26"/>
    </location>
</feature>
<feature type="strand" evidence="3">
    <location>
        <begin position="27"/>
        <end position="33"/>
    </location>
</feature>
<feature type="helix" evidence="3">
    <location>
        <begin position="39"/>
        <end position="50"/>
    </location>
</feature>
<feature type="strand" evidence="3">
    <location>
        <begin position="54"/>
        <end position="62"/>
    </location>
</feature>
<feature type="strand" evidence="3">
    <location>
        <begin position="66"/>
        <end position="69"/>
    </location>
</feature>
<feature type="strand" evidence="3">
    <location>
        <begin position="72"/>
        <end position="75"/>
    </location>
</feature>
<feature type="strand" evidence="3">
    <location>
        <begin position="79"/>
        <end position="89"/>
    </location>
</feature>
<keyword id="KW-0002">3D-structure</keyword>
<keyword id="KW-0687">Ribonucleoprotein</keyword>
<keyword id="KW-0689">Ribosomal protein</keyword>
<keyword id="KW-0694">RNA-binding</keyword>
<keyword id="KW-0699">rRNA-binding</keyword>